<evidence type="ECO:0000250" key="1"/>
<evidence type="ECO:0000269" key="2">
    <source>
    </source>
</evidence>
<evidence type="ECO:0000303" key="3">
    <source>
    </source>
</evidence>
<evidence type="ECO:0000303" key="4">
    <source>
    </source>
</evidence>
<evidence type="ECO:0000305" key="5"/>
<evidence type="ECO:0000305" key="6">
    <source>
    </source>
</evidence>
<feature type="peptide" id="PRO_0000044473" description="Delta-conotoxin TxVIB" evidence="2">
    <location>
        <begin position="1"/>
        <end position="27"/>
    </location>
</feature>
<feature type="disulfide bond" evidence="1">
    <location>
        <begin position="2"/>
        <end position="17"/>
    </location>
</feature>
<feature type="disulfide bond" evidence="1">
    <location>
        <begin position="9"/>
        <end position="21"/>
    </location>
</feature>
<feature type="disulfide bond" evidence="1">
    <location>
        <begin position="16"/>
        <end position="26"/>
    </location>
</feature>
<protein>
    <recommendedName>
        <fullName evidence="5">Delta-conotoxin TxVIB</fullName>
    </recommendedName>
    <alternativeName>
        <fullName evidence="3 4">TxIB</fullName>
    </alternativeName>
</protein>
<comment type="function">
    <text>Delta-conotoxins bind to site 6 of voltage-gated sodium channels (Nav) and inhibit the inactivation process. Induces membrane depolarization and spontaneous repetitive firing of neurons.</text>
</comment>
<comment type="subcellular location">
    <subcellularLocation>
        <location evidence="2">Secreted</location>
    </subcellularLocation>
</comment>
<comment type="tissue specificity">
    <text evidence="6">Expressed by the venom duct.</text>
</comment>
<comment type="domain">
    <text evidence="1">The presence of a 'disulfide through disulfide knot' structurally defines this protein as a knottin.</text>
</comment>
<comment type="domain">
    <text evidence="5">The cysteine framework is VI/VII (C-C-CC-C-C).</text>
</comment>
<comment type="similarity">
    <text evidence="5">Belongs to the conotoxin O1 superfamily.</text>
</comment>
<dbReference type="PIR" id="S19619">
    <property type="entry name" value="S19619"/>
</dbReference>
<dbReference type="SMR" id="P24159"/>
<dbReference type="ConoServer" id="1553">
    <property type="toxin name" value="TxVIB"/>
</dbReference>
<dbReference type="GO" id="GO:0005576">
    <property type="term" value="C:extracellular region"/>
    <property type="evidence" value="ECO:0007669"/>
    <property type="project" value="UniProtKB-SubCell"/>
</dbReference>
<dbReference type="GO" id="GO:0019871">
    <property type="term" value="F:sodium channel inhibitor activity"/>
    <property type="evidence" value="ECO:0007669"/>
    <property type="project" value="InterPro"/>
</dbReference>
<dbReference type="GO" id="GO:0090729">
    <property type="term" value="F:toxin activity"/>
    <property type="evidence" value="ECO:0007669"/>
    <property type="project" value="UniProtKB-KW"/>
</dbReference>
<dbReference type="InterPro" id="IPR012322">
    <property type="entry name" value="Conotoxin_d-typ_CS"/>
</dbReference>
<dbReference type="SUPFAM" id="SSF57059">
    <property type="entry name" value="omega toxin-like"/>
    <property type="match status" value="1"/>
</dbReference>
<dbReference type="PROSITE" id="PS60005">
    <property type="entry name" value="DELTA_CONOTOXIN"/>
    <property type="match status" value="1"/>
</dbReference>
<reference key="1">
    <citation type="journal article" date="1991" name="Eur. J. Biochem.">
        <title>Mollusc-specific toxins from the venom of Conus textile neovicarius.</title>
        <authorList>
            <person name="Fainzilber M."/>
            <person name="Gordon D."/>
            <person name="Hasson A."/>
            <person name="Spira M.E."/>
            <person name="Zlotkin E."/>
        </authorList>
    </citation>
    <scope>PROTEIN SEQUENCE</scope>
    <scope>SUBCELLULAR LOCATION</scope>
    <source>
        <strain>Neovicarius</strain>
        <tissue>Venom</tissue>
    </source>
</reference>
<reference key="2">
    <citation type="journal article" date="1993" name="Eur. J. Neurosci.">
        <title>Alteration of sodium currents by new peptide toxins from the venom of a molluscivorous Conus snail.</title>
        <authorList>
            <person name="Hasson A."/>
            <person name="Fainzilber M."/>
            <person name="Gordon D."/>
            <person name="Zlotkin E."/>
            <person name="Spira M.E."/>
        </authorList>
    </citation>
    <scope>CHARACTERIZATION</scope>
</reference>
<keyword id="KW-0903">Direct protein sequencing</keyword>
<keyword id="KW-1015">Disulfide bond</keyword>
<keyword id="KW-0872">Ion channel impairing toxin</keyword>
<keyword id="KW-0960">Knottin</keyword>
<keyword id="KW-0528">Neurotoxin</keyword>
<keyword id="KW-0964">Secreted</keyword>
<keyword id="KW-0800">Toxin</keyword>
<keyword id="KW-0738">Voltage-gated sodium channel impairing toxin</keyword>
<organism>
    <name type="scientific">Conus textile</name>
    <name type="common">Cloth-of-gold cone</name>
    <dbReference type="NCBI Taxonomy" id="6494"/>
    <lineage>
        <taxon>Eukaryota</taxon>
        <taxon>Metazoa</taxon>
        <taxon>Spiralia</taxon>
        <taxon>Lophotrochozoa</taxon>
        <taxon>Mollusca</taxon>
        <taxon>Gastropoda</taxon>
        <taxon>Caenogastropoda</taxon>
        <taxon>Neogastropoda</taxon>
        <taxon>Conoidea</taxon>
        <taxon>Conidae</taxon>
        <taxon>Conus</taxon>
        <taxon>Cylinder</taxon>
    </lineage>
</organism>
<proteinExistence type="evidence at protein level"/>
<name>O16B_CONTE</name>
<sequence length="27" mass="3063">WCKQSGEMCNVLDQNCCDGYCIVFVCT</sequence>
<accession>P24159</accession>